<accession>Q8BGW8</accession>
<accession>Q8BWB4</accession>
<proteinExistence type="evidence at protein level"/>
<comment type="function">
    <text evidence="2">May act as a specific coactivator for the mammalian TEFs. May play a role in the development of skeletal muscles.</text>
</comment>
<comment type="subunit">
    <text evidence="2">Interacts with TEFs. Binds to TEAD1/TEF1.</text>
</comment>
<comment type="subcellular location">
    <subcellularLocation>
        <location evidence="2">Nucleus</location>
    </subcellularLocation>
</comment>
<comment type="tissue specificity">
    <text evidence="3">Skeletal muscle specific.</text>
</comment>
<comment type="developmental stage">
    <text evidence="3">Expressed in the somitic myotome from 8.75 dpc mouse embryos onwards and later on in skeletal muscle but not in the heart. Additional expression domains during development are detected in the pharyngeal pouches and clefts starting at 8.0 dpc as well as in the cranial pharynx and in Rathkes pouch.</text>
</comment>
<comment type="similarity">
    <text evidence="4">Belongs to the vestigial family.</text>
</comment>
<sequence length="322" mass="34064">MSCLDVMYQVYGPPQPYFAAAYTPYHQKLAYYSKMQEAQECASPGSSASGSSSFSNPTPASVKEEEGSPEKERPPEAEYINSRCVLFTYFQGDISSVVDEHFSRALSHPSSYTPSCTSSKAHRSSGPWRAEGTFPMSQRSFPASFWNSAYQAPVPAPLGSPLAAAHSELPFATDPYSPATLHGHLHQGAADWHHAHPHHAHPHHPYALGGALGAQASAYPRPAVHEVYAPHFDPRYGPLLMPAATGRPGRLAPASAPAPGSPPCELAAKGEPAGSAWAAPGGPFVSPTGDVAQSLGLSVDSGKRRRECSLPSAPPALYPTLG</sequence>
<keyword id="KW-0539">Nucleus</keyword>
<keyword id="KW-1185">Reference proteome</keyword>
<keyword id="KW-0804">Transcription</keyword>
<keyword id="KW-0805">Transcription regulation</keyword>
<feature type="chain" id="PRO_0000191350" description="Transcription cofactor vestigial-like protein 2">
    <location>
        <begin position="1"/>
        <end position="322"/>
    </location>
</feature>
<feature type="region of interest" description="Disordered" evidence="1">
    <location>
        <begin position="42"/>
        <end position="75"/>
    </location>
</feature>
<feature type="region of interest" description="Disordered" evidence="1">
    <location>
        <begin position="248"/>
        <end position="322"/>
    </location>
</feature>
<feature type="compositionally biased region" description="Low complexity" evidence="1">
    <location>
        <begin position="42"/>
        <end position="61"/>
    </location>
</feature>
<feature type="compositionally biased region" description="Basic and acidic residues" evidence="1">
    <location>
        <begin position="62"/>
        <end position="75"/>
    </location>
</feature>
<feature type="compositionally biased region" description="Low complexity" evidence="1">
    <location>
        <begin position="248"/>
        <end position="258"/>
    </location>
</feature>
<feature type="compositionally biased region" description="Low complexity" evidence="1">
    <location>
        <begin position="270"/>
        <end position="283"/>
    </location>
</feature>
<feature type="compositionally biased region" description="Pro residues" evidence="1">
    <location>
        <begin position="312"/>
        <end position="322"/>
    </location>
</feature>
<feature type="sequence conflict" description="In Ref. 3; BAC35232." evidence="4" ref="3">
    <location>
        <position position="130"/>
    </location>
</feature>
<name>VGLL2_MOUSE</name>
<dbReference type="EMBL" id="AF542181">
    <property type="protein sequence ID" value="AAN37898.1"/>
    <property type="molecule type" value="mRNA"/>
</dbReference>
<dbReference type="EMBL" id="AJ578054">
    <property type="protein sequence ID" value="CAE17332.1"/>
    <property type="molecule type" value="mRNA"/>
</dbReference>
<dbReference type="EMBL" id="AK048390">
    <property type="protein sequence ID" value="BAC33319.1"/>
    <property type="molecule type" value="mRNA"/>
</dbReference>
<dbReference type="EMBL" id="AK052987">
    <property type="protein sequence ID" value="BAC35232.1"/>
    <property type="molecule type" value="mRNA"/>
</dbReference>
<dbReference type="CCDS" id="CCDS23837.1"/>
<dbReference type="RefSeq" id="NP_001287886.1">
    <property type="nucleotide sequence ID" value="NM_001300957.1"/>
</dbReference>
<dbReference type="RefSeq" id="NP_722481.1">
    <property type="nucleotide sequence ID" value="NM_153786.2"/>
</dbReference>
<dbReference type="BioGRID" id="229591">
    <property type="interactions" value="2"/>
</dbReference>
<dbReference type="FunCoup" id="Q8BGW8">
    <property type="interactions" value="1653"/>
</dbReference>
<dbReference type="STRING" id="10090.ENSMUSP00000124091"/>
<dbReference type="GlyGen" id="Q8BGW8">
    <property type="glycosylation" value="1 site"/>
</dbReference>
<dbReference type="PhosphoSitePlus" id="Q8BGW8"/>
<dbReference type="PaxDb" id="10090-ENSMUSP00000124091"/>
<dbReference type="ProteomicsDB" id="297546"/>
<dbReference type="Antibodypedia" id="32540">
    <property type="antibodies" value="196 antibodies from 25 providers"/>
</dbReference>
<dbReference type="DNASU" id="215031"/>
<dbReference type="Ensembl" id="ENSMUST00000163017.10">
    <property type="protein sequence ID" value="ENSMUSP00000124091.2"/>
    <property type="gene ID" value="ENSMUSG00000049641.16"/>
</dbReference>
<dbReference type="GeneID" id="215031"/>
<dbReference type="KEGG" id="mmu:215031"/>
<dbReference type="UCSC" id="uc007faz.2">
    <property type="organism name" value="mouse"/>
</dbReference>
<dbReference type="AGR" id="MGI:2447460"/>
<dbReference type="CTD" id="245806"/>
<dbReference type="MGI" id="MGI:2447460">
    <property type="gene designation" value="Vgll2"/>
</dbReference>
<dbReference type="VEuPathDB" id="HostDB:ENSMUSG00000049641"/>
<dbReference type="eggNOG" id="ENOG502QS1A">
    <property type="taxonomic scope" value="Eukaryota"/>
</dbReference>
<dbReference type="GeneTree" id="ENSGT00530000063353"/>
<dbReference type="HOGENOM" id="CLU_056560_1_0_1"/>
<dbReference type="InParanoid" id="Q8BGW8"/>
<dbReference type="OMA" id="TEIGLNM"/>
<dbReference type="OrthoDB" id="10069705at2759"/>
<dbReference type="PhylomeDB" id="Q8BGW8"/>
<dbReference type="TreeFam" id="TF326340"/>
<dbReference type="BioGRID-ORCS" id="215031">
    <property type="hits" value="2 hits in 78 CRISPR screens"/>
</dbReference>
<dbReference type="PRO" id="PR:Q8BGW8"/>
<dbReference type="Proteomes" id="UP000000589">
    <property type="component" value="Chromosome 10"/>
</dbReference>
<dbReference type="RNAct" id="Q8BGW8">
    <property type="molecule type" value="protein"/>
</dbReference>
<dbReference type="Bgee" id="ENSMUSG00000049641">
    <property type="expression patterns" value="Expressed in soleus muscle and 91 other cell types or tissues"/>
</dbReference>
<dbReference type="GO" id="GO:0005737">
    <property type="term" value="C:cytoplasm"/>
    <property type="evidence" value="ECO:0000314"/>
    <property type="project" value="MGI"/>
</dbReference>
<dbReference type="GO" id="GO:0005634">
    <property type="term" value="C:nucleus"/>
    <property type="evidence" value="ECO:0000314"/>
    <property type="project" value="MGI"/>
</dbReference>
<dbReference type="GO" id="GO:0003713">
    <property type="term" value="F:transcription coactivator activity"/>
    <property type="evidence" value="ECO:0000314"/>
    <property type="project" value="MGI"/>
</dbReference>
<dbReference type="GO" id="GO:0045944">
    <property type="term" value="P:positive regulation of transcription by RNA polymerase II"/>
    <property type="evidence" value="ECO:0000314"/>
    <property type="project" value="MGI"/>
</dbReference>
<dbReference type="GO" id="GO:0007519">
    <property type="term" value="P:skeletal muscle tissue development"/>
    <property type="evidence" value="ECO:0000314"/>
    <property type="project" value="MGI"/>
</dbReference>
<dbReference type="InterPro" id="IPR011520">
    <property type="entry name" value="Vg_fam"/>
</dbReference>
<dbReference type="PANTHER" id="PTHR15950">
    <property type="entry name" value="TRANSCRIPTION COFACTOR VESTIGIAL-LIKE PROTEIN"/>
    <property type="match status" value="1"/>
</dbReference>
<dbReference type="PANTHER" id="PTHR15950:SF17">
    <property type="entry name" value="TRANSCRIPTION COFACTOR VESTIGIAL-LIKE PROTEIN 2"/>
    <property type="match status" value="1"/>
</dbReference>
<dbReference type="Pfam" id="PF07545">
    <property type="entry name" value="Vg_Tdu"/>
    <property type="match status" value="1"/>
</dbReference>
<reference key="1">
    <citation type="journal article" date="2002" name="J. Biol. Chem.">
        <title>Mammalian vestigial-like 2, a cofactor of TEF-1 and MEF2 transcription factors that promotes skeletal muscle differentiation.</title>
        <authorList>
            <person name="Maeda T."/>
            <person name="Chapman D.L."/>
            <person name="Stewart A.F.R."/>
        </authorList>
    </citation>
    <scope>NUCLEOTIDE SEQUENCE [MRNA]</scope>
    <scope>FUNCTION</scope>
    <scope>INTERACTION WITH TEFS</scope>
    <scope>SUBCELLULAR LOCATION</scope>
    <source>
        <strain>C57BL/6J</strain>
    </source>
</reference>
<reference key="2">
    <citation type="journal article" date="2002" name="Gene Expr. Patterns">
        <title>VITO-1, a novel vestigial related protein is predominantly expressed in the skeletal muscle lineage.</title>
        <authorList>
            <person name="Mielcarek M."/>
            <person name="Gunther S."/>
            <person name="Kruger M."/>
            <person name="Braun T."/>
        </authorList>
    </citation>
    <scope>NUCLEOTIDE SEQUENCE [MRNA]</scope>
    <scope>DEVELOPMENTAL STAGE</scope>
    <scope>TISSUE SPECIFICITY</scope>
    <source>
        <strain>C57BL/6J</strain>
    </source>
</reference>
<reference key="3">
    <citation type="journal article" date="2005" name="Science">
        <title>The transcriptional landscape of the mammalian genome.</title>
        <authorList>
            <person name="Carninci P."/>
            <person name="Kasukawa T."/>
            <person name="Katayama S."/>
            <person name="Gough J."/>
            <person name="Frith M.C."/>
            <person name="Maeda N."/>
            <person name="Oyama R."/>
            <person name="Ravasi T."/>
            <person name="Lenhard B."/>
            <person name="Wells C."/>
            <person name="Kodzius R."/>
            <person name="Shimokawa K."/>
            <person name="Bajic V.B."/>
            <person name="Brenner S.E."/>
            <person name="Batalov S."/>
            <person name="Forrest A.R."/>
            <person name="Zavolan M."/>
            <person name="Davis M.J."/>
            <person name="Wilming L.G."/>
            <person name="Aidinis V."/>
            <person name="Allen J.E."/>
            <person name="Ambesi-Impiombato A."/>
            <person name="Apweiler R."/>
            <person name="Aturaliya R.N."/>
            <person name="Bailey T.L."/>
            <person name="Bansal M."/>
            <person name="Baxter L."/>
            <person name="Beisel K.W."/>
            <person name="Bersano T."/>
            <person name="Bono H."/>
            <person name="Chalk A.M."/>
            <person name="Chiu K.P."/>
            <person name="Choudhary V."/>
            <person name="Christoffels A."/>
            <person name="Clutterbuck D.R."/>
            <person name="Crowe M.L."/>
            <person name="Dalla E."/>
            <person name="Dalrymple B.P."/>
            <person name="de Bono B."/>
            <person name="Della Gatta G."/>
            <person name="di Bernardo D."/>
            <person name="Down T."/>
            <person name="Engstrom P."/>
            <person name="Fagiolini M."/>
            <person name="Faulkner G."/>
            <person name="Fletcher C.F."/>
            <person name="Fukushima T."/>
            <person name="Furuno M."/>
            <person name="Futaki S."/>
            <person name="Gariboldi M."/>
            <person name="Georgii-Hemming P."/>
            <person name="Gingeras T.R."/>
            <person name="Gojobori T."/>
            <person name="Green R.E."/>
            <person name="Gustincich S."/>
            <person name="Harbers M."/>
            <person name="Hayashi Y."/>
            <person name="Hensch T.K."/>
            <person name="Hirokawa N."/>
            <person name="Hill D."/>
            <person name="Huminiecki L."/>
            <person name="Iacono M."/>
            <person name="Ikeo K."/>
            <person name="Iwama A."/>
            <person name="Ishikawa T."/>
            <person name="Jakt M."/>
            <person name="Kanapin A."/>
            <person name="Katoh M."/>
            <person name="Kawasawa Y."/>
            <person name="Kelso J."/>
            <person name="Kitamura H."/>
            <person name="Kitano H."/>
            <person name="Kollias G."/>
            <person name="Krishnan S.P."/>
            <person name="Kruger A."/>
            <person name="Kummerfeld S.K."/>
            <person name="Kurochkin I.V."/>
            <person name="Lareau L.F."/>
            <person name="Lazarevic D."/>
            <person name="Lipovich L."/>
            <person name="Liu J."/>
            <person name="Liuni S."/>
            <person name="McWilliam S."/>
            <person name="Madan Babu M."/>
            <person name="Madera M."/>
            <person name="Marchionni L."/>
            <person name="Matsuda H."/>
            <person name="Matsuzawa S."/>
            <person name="Miki H."/>
            <person name="Mignone F."/>
            <person name="Miyake S."/>
            <person name="Morris K."/>
            <person name="Mottagui-Tabar S."/>
            <person name="Mulder N."/>
            <person name="Nakano N."/>
            <person name="Nakauchi H."/>
            <person name="Ng P."/>
            <person name="Nilsson R."/>
            <person name="Nishiguchi S."/>
            <person name="Nishikawa S."/>
            <person name="Nori F."/>
            <person name="Ohara O."/>
            <person name="Okazaki Y."/>
            <person name="Orlando V."/>
            <person name="Pang K.C."/>
            <person name="Pavan W.J."/>
            <person name="Pavesi G."/>
            <person name="Pesole G."/>
            <person name="Petrovsky N."/>
            <person name="Piazza S."/>
            <person name="Reed J."/>
            <person name="Reid J.F."/>
            <person name="Ring B.Z."/>
            <person name="Ringwald M."/>
            <person name="Rost B."/>
            <person name="Ruan Y."/>
            <person name="Salzberg S.L."/>
            <person name="Sandelin A."/>
            <person name="Schneider C."/>
            <person name="Schoenbach C."/>
            <person name="Sekiguchi K."/>
            <person name="Semple C.A."/>
            <person name="Seno S."/>
            <person name="Sessa L."/>
            <person name="Sheng Y."/>
            <person name="Shibata Y."/>
            <person name="Shimada H."/>
            <person name="Shimada K."/>
            <person name="Silva D."/>
            <person name="Sinclair B."/>
            <person name="Sperling S."/>
            <person name="Stupka E."/>
            <person name="Sugiura K."/>
            <person name="Sultana R."/>
            <person name="Takenaka Y."/>
            <person name="Taki K."/>
            <person name="Tammoja K."/>
            <person name="Tan S.L."/>
            <person name="Tang S."/>
            <person name="Taylor M.S."/>
            <person name="Tegner J."/>
            <person name="Teichmann S.A."/>
            <person name="Ueda H.R."/>
            <person name="van Nimwegen E."/>
            <person name="Verardo R."/>
            <person name="Wei C.L."/>
            <person name="Yagi K."/>
            <person name="Yamanishi H."/>
            <person name="Zabarovsky E."/>
            <person name="Zhu S."/>
            <person name="Zimmer A."/>
            <person name="Hide W."/>
            <person name="Bult C."/>
            <person name="Grimmond S.M."/>
            <person name="Teasdale R.D."/>
            <person name="Liu E.T."/>
            <person name="Brusic V."/>
            <person name="Quackenbush J."/>
            <person name="Wahlestedt C."/>
            <person name="Mattick J.S."/>
            <person name="Hume D.A."/>
            <person name="Kai C."/>
            <person name="Sasaki D."/>
            <person name="Tomaru Y."/>
            <person name="Fukuda S."/>
            <person name="Kanamori-Katayama M."/>
            <person name="Suzuki M."/>
            <person name="Aoki J."/>
            <person name="Arakawa T."/>
            <person name="Iida J."/>
            <person name="Imamura K."/>
            <person name="Itoh M."/>
            <person name="Kato T."/>
            <person name="Kawaji H."/>
            <person name="Kawagashira N."/>
            <person name="Kawashima T."/>
            <person name="Kojima M."/>
            <person name="Kondo S."/>
            <person name="Konno H."/>
            <person name="Nakano K."/>
            <person name="Ninomiya N."/>
            <person name="Nishio T."/>
            <person name="Okada M."/>
            <person name="Plessy C."/>
            <person name="Shibata K."/>
            <person name="Shiraki T."/>
            <person name="Suzuki S."/>
            <person name="Tagami M."/>
            <person name="Waki K."/>
            <person name="Watahiki A."/>
            <person name="Okamura-Oho Y."/>
            <person name="Suzuki H."/>
            <person name="Kawai J."/>
            <person name="Hayashizaki Y."/>
        </authorList>
    </citation>
    <scope>NUCLEOTIDE SEQUENCE [LARGE SCALE MRNA]</scope>
    <source>
        <strain>C57BL/6J</strain>
        <tissue>Head</tissue>
    </source>
</reference>
<organism>
    <name type="scientific">Mus musculus</name>
    <name type="common">Mouse</name>
    <dbReference type="NCBI Taxonomy" id="10090"/>
    <lineage>
        <taxon>Eukaryota</taxon>
        <taxon>Metazoa</taxon>
        <taxon>Chordata</taxon>
        <taxon>Craniata</taxon>
        <taxon>Vertebrata</taxon>
        <taxon>Euteleostomi</taxon>
        <taxon>Mammalia</taxon>
        <taxon>Eutheria</taxon>
        <taxon>Euarchontoglires</taxon>
        <taxon>Glires</taxon>
        <taxon>Rodentia</taxon>
        <taxon>Myomorpha</taxon>
        <taxon>Muroidea</taxon>
        <taxon>Muridae</taxon>
        <taxon>Murinae</taxon>
        <taxon>Mus</taxon>
        <taxon>Mus</taxon>
    </lineage>
</organism>
<gene>
    <name type="primary">Vgll2</name>
    <name type="synonym">Vgl2</name>
    <name type="synonym">Vito1</name>
</gene>
<evidence type="ECO:0000256" key="1">
    <source>
        <dbReference type="SAM" id="MobiDB-lite"/>
    </source>
</evidence>
<evidence type="ECO:0000269" key="2">
    <source>
    </source>
</evidence>
<evidence type="ECO:0000269" key="3">
    <source>
    </source>
</evidence>
<evidence type="ECO:0000305" key="4"/>
<protein>
    <recommendedName>
        <fullName>Transcription cofactor vestigial-like protein 2</fullName>
        <shortName>Vgl-2</shortName>
    </recommendedName>
    <alternativeName>
        <fullName>Protein VITO1</fullName>
    </alternativeName>
</protein>